<reference key="1">
    <citation type="journal article" date="2007" name="PLoS Genet.">
        <title>Patterns and implications of gene gain and loss in the evolution of Prochlorococcus.</title>
        <authorList>
            <person name="Kettler G.C."/>
            <person name="Martiny A.C."/>
            <person name="Huang K."/>
            <person name="Zucker J."/>
            <person name="Coleman M.L."/>
            <person name="Rodrigue S."/>
            <person name="Chen F."/>
            <person name="Lapidus A."/>
            <person name="Ferriera S."/>
            <person name="Johnson J."/>
            <person name="Steglich C."/>
            <person name="Church G.M."/>
            <person name="Richardson P."/>
            <person name="Chisholm S.W."/>
        </authorList>
    </citation>
    <scope>NUCLEOTIDE SEQUENCE [LARGE SCALE GENOMIC DNA]</scope>
    <source>
        <strain>NATL2A</strain>
    </source>
</reference>
<protein>
    <recommendedName>
        <fullName evidence="1">Large ribosomal subunit protein bL33</fullName>
    </recommendedName>
    <alternativeName>
        <fullName evidence="3">50S ribosomal protein L33</fullName>
    </alternativeName>
</protein>
<keyword id="KW-1185">Reference proteome</keyword>
<keyword id="KW-0687">Ribonucleoprotein</keyword>
<keyword id="KW-0689">Ribosomal protein</keyword>
<comment type="similarity">
    <text evidence="1">Belongs to the bacterial ribosomal protein bL33 family.</text>
</comment>
<feature type="chain" id="PRO_1000115155" description="Large ribosomal subunit protein bL33">
    <location>
        <begin position="1"/>
        <end position="65"/>
    </location>
</feature>
<feature type="region of interest" description="Disordered" evidence="2">
    <location>
        <begin position="19"/>
        <end position="40"/>
    </location>
</feature>
<accession>Q46KZ7</accession>
<sequence>MAKKGTRIVVTLECTESRTVPSSKKRSAGVSRYTTEKNRRNTTERLELKKFCPELNKMTIHREIK</sequence>
<organism>
    <name type="scientific">Prochlorococcus marinus (strain NATL2A)</name>
    <dbReference type="NCBI Taxonomy" id="59920"/>
    <lineage>
        <taxon>Bacteria</taxon>
        <taxon>Bacillati</taxon>
        <taxon>Cyanobacteriota</taxon>
        <taxon>Cyanophyceae</taxon>
        <taxon>Synechococcales</taxon>
        <taxon>Prochlorococcaceae</taxon>
        <taxon>Prochlorococcus</taxon>
    </lineage>
</organism>
<gene>
    <name evidence="1" type="primary">rpmG</name>
    <name evidence="1" type="synonym">rpl33</name>
    <name type="ordered locus">PMN2A_0339</name>
</gene>
<evidence type="ECO:0000255" key="1">
    <source>
        <dbReference type="HAMAP-Rule" id="MF_00294"/>
    </source>
</evidence>
<evidence type="ECO:0000256" key="2">
    <source>
        <dbReference type="SAM" id="MobiDB-lite"/>
    </source>
</evidence>
<evidence type="ECO:0000305" key="3"/>
<dbReference type="EMBL" id="CP000095">
    <property type="protein sequence ID" value="AAZ57831.1"/>
    <property type="molecule type" value="Genomic_DNA"/>
</dbReference>
<dbReference type="RefSeq" id="WP_011293873.1">
    <property type="nucleotide sequence ID" value="NC_007335.2"/>
</dbReference>
<dbReference type="SMR" id="Q46KZ7"/>
<dbReference type="STRING" id="59920.PMN2A_0339"/>
<dbReference type="KEGG" id="pmn:PMN2A_0339"/>
<dbReference type="HOGENOM" id="CLU_190949_3_0_3"/>
<dbReference type="OrthoDB" id="9801333at2"/>
<dbReference type="PhylomeDB" id="Q46KZ7"/>
<dbReference type="Proteomes" id="UP000002535">
    <property type="component" value="Chromosome"/>
</dbReference>
<dbReference type="GO" id="GO:0005737">
    <property type="term" value="C:cytoplasm"/>
    <property type="evidence" value="ECO:0007669"/>
    <property type="project" value="UniProtKB-ARBA"/>
</dbReference>
<dbReference type="GO" id="GO:1990904">
    <property type="term" value="C:ribonucleoprotein complex"/>
    <property type="evidence" value="ECO:0007669"/>
    <property type="project" value="UniProtKB-KW"/>
</dbReference>
<dbReference type="GO" id="GO:0005840">
    <property type="term" value="C:ribosome"/>
    <property type="evidence" value="ECO:0007669"/>
    <property type="project" value="UniProtKB-KW"/>
</dbReference>
<dbReference type="GO" id="GO:0003735">
    <property type="term" value="F:structural constituent of ribosome"/>
    <property type="evidence" value="ECO:0007669"/>
    <property type="project" value="InterPro"/>
</dbReference>
<dbReference type="GO" id="GO:0006412">
    <property type="term" value="P:translation"/>
    <property type="evidence" value="ECO:0007669"/>
    <property type="project" value="UniProtKB-UniRule"/>
</dbReference>
<dbReference type="Gene3D" id="2.20.28.120">
    <property type="entry name" value="Ribosomal protein L33"/>
    <property type="match status" value="1"/>
</dbReference>
<dbReference type="HAMAP" id="MF_00294">
    <property type="entry name" value="Ribosomal_bL33"/>
    <property type="match status" value="1"/>
</dbReference>
<dbReference type="InterPro" id="IPR001705">
    <property type="entry name" value="Ribosomal_bL33"/>
</dbReference>
<dbReference type="InterPro" id="IPR018264">
    <property type="entry name" value="Ribosomal_bL33_CS"/>
</dbReference>
<dbReference type="InterPro" id="IPR038584">
    <property type="entry name" value="Ribosomal_bL33_sf"/>
</dbReference>
<dbReference type="InterPro" id="IPR011332">
    <property type="entry name" value="Ribosomal_zn-bd"/>
</dbReference>
<dbReference type="NCBIfam" id="NF001764">
    <property type="entry name" value="PRK00504.1"/>
    <property type="match status" value="1"/>
</dbReference>
<dbReference type="NCBIfam" id="NF001860">
    <property type="entry name" value="PRK00595.1"/>
    <property type="match status" value="1"/>
</dbReference>
<dbReference type="NCBIfam" id="TIGR01023">
    <property type="entry name" value="rpmG_bact"/>
    <property type="match status" value="1"/>
</dbReference>
<dbReference type="PANTHER" id="PTHR43168">
    <property type="entry name" value="50S RIBOSOMAL PROTEIN L33, CHLOROPLASTIC"/>
    <property type="match status" value="1"/>
</dbReference>
<dbReference type="PANTHER" id="PTHR43168:SF2">
    <property type="entry name" value="LARGE RIBOSOMAL SUBUNIT PROTEIN BL33C"/>
    <property type="match status" value="1"/>
</dbReference>
<dbReference type="Pfam" id="PF00471">
    <property type="entry name" value="Ribosomal_L33"/>
    <property type="match status" value="1"/>
</dbReference>
<dbReference type="SUPFAM" id="SSF57829">
    <property type="entry name" value="Zn-binding ribosomal proteins"/>
    <property type="match status" value="1"/>
</dbReference>
<dbReference type="PROSITE" id="PS00582">
    <property type="entry name" value="RIBOSOMAL_L33"/>
    <property type="match status" value="1"/>
</dbReference>
<name>RL33_PROMT</name>
<proteinExistence type="inferred from homology"/>